<organismHost>
    <name type="scientific">Aves</name>
    <dbReference type="NCBI Taxonomy" id="8782"/>
</organismHost>
<organismHost>
    <name type="scientific">Equus caballus</name>
    <name type="common">Horse</name>
    <dbReference type="NCBI Taxonomy" id="9796"/>
</organismHost>
<organismHost>
    <name type="scientific">Homo sapiens</name>
    <name type="common">Human</name>
    <dbReference type="NCBI Taxonomy" id="9606"/>
</organismHost>
<organismHost>
    <name type="scientific">Phocidae</name>
    <name type="common">true seals</name>
    <dbReference type="NCBI Taxonomy" id="9709"/>
</organismHost>
<name>HEMA_I000F</name>
<keyword id="KW-1167">Clathrin- and caveolin-independent endocytosis of virus by host</keyword>
<keyword id="KW-1165">Clathrin-mediated endocytosis of virus by host</keyword>
<keyword id="KW-1015">Disulfide bond</keyword>
<keyword id="KW-1170">Fusion of virus membrane with host endosomal membrane</keyword>
<keyword id="KW-1168">Fusion of virus membrane with host membrane</keyword>
<keyword id="KW-0325">Glycoprotein</keyword>
<keyword id="KW-0348">Hemagglutinin</keyword>
<keyword id="KW-1032">Host cell membrane</keyword>
<keyword id="KW-1043">Host membrane</keyword>
<keyword id="KW-0945">Host-virus interaction</keyword>
<keyword id="KW-0449">Lipoprotein</keyword>
<keyword id="KW-0472">Membrane</keyword>
<keyword id="KW-0564">Palmitate</keyword>
<keyword id="KW-0732">Signal</keyword>
<keyword id="KW-0812">Transmembrane</keyword>
<keyword id="KW-1133">Transmembrane helix</keyword>
<keyword id="KW-1161">Viral attachment to host cell</keyword>
<keyword id="KW-0261">Viral envelope protein</keyword>
<keyword id="KW-1162">Viral penetration into host cytoplasm</keyword>
<keyword id="KW-0946">Virion</keyword>
<keyword id="KW-1164">Virus endocytosis by host</keyword>
<keyword id="KW-1160">Virus entry into host cell</keyword>
<reference key="1">
    <citation type="journal article" date="1992" name="Arch. Virol.">
        <title>Subtype H7 influenza viruses: comparative antigenic and molecular analysis of the HA-, M-, and NS-genes.</title>
        <authorList>
            <person name="Klimov A."/>
            <person name="Proesch S."/>
            <person name="Schaefer J."/>
            <person name="Bucher D."/>
        </authorList>
    </citation>
    <scope>NUCLEOTIDE SEQUENCE [GENOMIC RNA]</scope>
</reference>
<reference key="2">
    <citation type="submission" date="1994-11" db="EMBL/GenBank/DDBJ databases">
        <authorList>
            <person name="Klimov A."/>
            <person name="Prosch S."/>
            <person name="Schafer J."/>
            <person name="Bucher D."/>
        </authorList>
    </citation>
    <scope>SEQUENCE REVISION</scope>
</reference>
<comment type="function">
    <text>Binds to sialic acid-containing receptors on the cell surface, bringing about the attachment of the virus particle to the cell. This attachment induces virion internalization of about two third of the virus particles through clathrin-dependent endocytosis and about one third through a clathrin- and caveolin-independent pathway. Plays a major role in the determination of host range restriction and virulence. Class I viral fusion protein. Responsible for penetration of the virus into the cell cytoplasm by mediating the fusion of the membrane of the endocytosed virus particle with the endosomal membrane. Low pH in endosomes induces an irreversible conformational change in HA2, releasing the fusion hydrophobic peptide. Several trimers are required to form a competent fusion pore.</text>
</comment>
<comment type="function">
    <text evidence="1">Binds to sialic acid-containing receptors on the cell surface, bringing about the attachment of the virus particle to the cell. This attachment induces virion internalization either through clathrin-dependent endocytosis or through clathrin- and caveolin-independent pathway. Plays a major role in the determination of host range restriction and virulence. Class I viral fusion protein. Responsible for penetration of the virus into the cell cytoplasm by mediating the fusion of the membrane of the endocytosed virus particle with the endosomal membrane. Low pH in endosomes induces an irreversible conformational change in HA2, releasing the fusion hydrophobic peptide. Several trimers are required to form a competent fusion pore.</text>
</comment>
<comment type="subunit">
    <text evidence="1">Homotrimer of disulfide-linked HA1-HA2.</text>
</comment>
<comment type="subcellular location">
    <subcellularLocation>
        <location evidence="1">Virion membrane</location>
        <topology evidence="1">Single-pass type I membrane protein</topology>
    </subcellularLocation>
    <subcellularLocation>
        <location evidence="1">Host apical cell membrane</location>
        <topology evidence="1">Single-pass type I membrane protein</topology>
    </subcellularLocation>
    <text evidence="1">Targeted to the apical plasma membrane in epithelial polarized cells through a signal present in the transmembrane domain. Associated with glycosphingolipid- and cholesterol-enriched detergent-resistant lipid rafts.</text>
</comment>
<comment type="PTM">
    <text evidence="1">Palmitoylated.</text>
</comment>
<comment type="PTM">
    <text evidence="1">In natural infection, inactive HA is matured into HA1 and HA2 outside the cell by one or more trypsin-like, arginine-specific endoprotease secreted by the bronchial epithelial cells. One identified protease that may be involved in this process is secreted in lungs by club cells.</text>
</comment>
<comment type="miscellaneous">
    <text>Major glycoprotein, comprises over 80% of the envelope proteins present in virus particle.</text>
</comment>
<comment type="miscellaneous">
    <text>The extent of infection into host organism is determined by HA. Influenza viruses bud from the apical surface of polarized epithelial cells (e.g. bronchial epithelial cells) into lumen of lungs and are therefore usually pneumotropic. The reason is that HA is cleaved by tryptase clara which is restricted to lungs. However, HAs of H5 and H7 pantropic avian viruses subtypes can be cleaved by furin and subtilisin-type enzymes, allowing the virus to grow in other organs than lungs.</text>
</comment>
<comment type="miscellaneous">
    <text evidence="2">The influenza A genome consist of 8 RNA segments. Genetic variation of hemagglutinin and/or neuraminidase genes results in the emergence of new influenza strains. The mechanism of variation can be the result of point mutations or the result of genetic reassortment between segments of two different strains.</text>
</comment>
<comment type="similarity">
    <text evidence="1">Belongs to the influenza viruses hemagglutinin family.</text>
</comment>
<gene>
    <name evidence="1" type="primary">HA</name>
</gene>
<evidence type="ECO:0000255" key="1">
    <source>
        <dbReference type="HAMAP-Rule" id="MF_04072"/>
    </source>
</evidence>
<evidence type="ECO:0000305" key="2"/>
<dbReference type="EMBL" id="L37794">
    <property type="protein sequence ID" value="AAA56803.1"/>
    <property type="molecule type" value="Genomic_RNA"/>
</dbReference>
<dbReference type="PIR" id="A45539">
    <property type="entry name" value="A45539"/>
</dbReference>
<dbReference type="SMR" id="P36346"/>
<dbReference type="GlyCosmos" id="P36346">
    <property type="glycosylation" value="6 sites, No reported glycans"/>
</dbReference>
<dbReference type="ABCD" id="P36346">
    <property type="antibodies" value="14 sequenced antibodies"/>
</dbReference>
<dbReference type="GO" id="GO:0020002">
    <property type="term" value="C:host cell plasma membrane"/>
    <property type="evidence" value="ECO:0007669"/>
    <property type="project" value="UniProtKB-SubCell"/>
</dbReference>
<dbReference type="GO" id="GO:0016020">
    <property type="term" value="C:membrane"/>
    <property type="evidence" value="ECO:0007669"/>
    <property type="project" value="UniProtKB-UniRule"/>
</dbReference>
<dbReference type="GO" id="GO:0019031">
    <property type="term" value="C:viral envelope"/>
    <property type="evidence" value="ECO:0007669"/>
    <property type="project" value="UniProtKB-UniRule"/>
</dbReference>
<dbReference type="GO" id="GO:0055036">
    <property type="term" value="C:virion membrane"/>
    <property type="evidence" value="ECO:0007669"/>
    <property type="project" value="UniProtKB-SubCell"/>
</dbReference>
<dbReference type="GO" id="GO:0046789">
    <property type="term" value="F:host cell surface receptor binding"/>
    <property type="evidence" value="ECO:0007669"/>
    <property type="project" value="UniProtKB-UniRule"/>
</dbReference>
<dbReference type="GO" id="GO:0075512">
    <property type="term" value="P:clathrin-dependent endocytosis of virus by host cell"/>
    <property type="evidence" value="ECO:0007669"/>
    <property type="project" value="UniProtKB-UniRule"/>
</dbReference>
<dbReference type="GO" id="GO:0039654">
    <property type="term" value="P:fusion of virus membrane with host endosome membrane"/>
    <property type="evidence" value="ECO:0007669"/>
    <property type="project" value="UniProtKB-UniRule"/>
</dbReference>
<dbReference type="GO" id="GO:0019064">
    <property type="term" value="P:fusion of virus membrane with host plasma membrane"/>
    <property type="evidence" value="ECO:0007669"/>
    <property type="project" value="InterPro"/>
</dbReference>
<dbReference type="GO" id="GO:0046761">
    <property type="term" value="P:viral budding from plasma membrane"/>
    <property type="evidence" value="ECO:0007669"/>
    <property type="project" value="UniProtKB-UniRule"/>
</dbReference>
<dbReference type="GO" id="GO:0019062">
    <property type="term" value="P:virion attachment to host cell"/>
    <property type="evidence" value="ECO:0007669"/>
    <property type="project" value="UniProtKB-KW"/>
</dbReference>
<dbReference type="Gene3D" id="3.90.20.10">
    <property type="match status" value="1"/>
</dbReference>
<dbReference type="Gene3D" id="3.90.209.20">
    <property type="match status" value="1"/>
</dbReference>
<dbReference type="HAMAP" id="MF_04072">
    <property type="entry name" value="INFV_HEMA"/>
    <property type="match status" value="1"/>
</dbReference>
<dbReference type="InterPro" id="IPR008980">
    <property type="entry name" value="Capsid_hemagglutn"/>
</dbReference>
<dbReference type="InterPro" id="IPR013828">
    <property type="entry name" value="Hemagglutn_HA1_a/b_dom_sf"/>
</dbReference>
<dbReference type="InterPro" id="IPR000149">
    <property type="entry name" value="Hemagglutn_influenz_A"/>
</dbReference>
<dbReference type="InterPro" id="IPR001364">
    <property type="entry name" value="Hemagglutn_influenz_A/B"/>
</dbReference>
<dbReference type="Pfam" id="PF00509">
    <property type="entry name" value="Hemagglutinin"/>
    <property type="match status" value="1"/>
</dbReference>
<dbReference type="PRINTS" id="PR00330">
    <property type="entry name" value="HEMAGGLUTN1"/>
</dbReference>
<dbReference type="PRINTS" id="PR00329">
    <property type="entry name" value="HEMAGGLUTN12"/>
</dbReference>
<dbReference type="SUPFAM" id="SSF58064">
    <property type="entry name" value="Influenza hemagglutinin (stalk)"/>
    <property type="match status" value="1"/>
</dbReference>
<dbReference type="SUPFAM" id="SSF49818">
    <property type="entry name" value="Viral protein domain"/>
    <property type="match status" value="1"/>
</dbReference>
<sequence>MNTQILVFALVAVIHTNADKICLGHHVSSNGTKVNTLTERGVEVVNATETVERTNIPKICSKGKRTVDLAKCGLLGTITGPPQCDQFLEFSADLIIERRDGNDVCYPGKFVNGEALRQILRKSGGINKETMGFTYSGIRTNGTTSACRRSGSSFYAEMKWLLSDTDNAAFPQMTKSYKNTRREPALIVWGIHHSGSTTEQTKLYGSGNKLVTVGSSKYHQSFVPSPGTRPQVNGQSGRIDFHWLILDSNDTVTFSFNGAFIAPDRASFLKGKSMGIQSDVQVDANCEGECYHSGGTITSSLPFQNINSRAVGKCPRYVKQESLLLATGMKNVPELPKKRRKRGLFGAIAGFIENGWEGLVDGWYCFRHQNAQGEGTAADYKSTQSAIDQITGKLNRLIEKTNQQFELIDNEFTEVEKQIGNVINWTRDSITEVWSYNAELLVAMENQHTIDLADSEMNKLYERVRKQLRENAEEDGTGCFEIFHKCDDDCMASIRNNTYDHSKYREEAIQNRIQIDPVKLSGGYKDVILWFSFGASCFLLLAIAMGLVFICVKYGNMRCTICI</sequence>
<proteinExistence type="inferred from homology"/>
<feature type="signal peptide" evidence="1">
    <location>
        <begin position="1"/>
        <end position="18"/>
    </location>
</feature>
<feature type="chain" id="PRO_0000440363" description="Hemagglutinin" evidence="1">
    <location>
        <begin position="19"/>
        <end position="563"/>
    </location>
</feature>
<feature type="chain" id="PRO_0000440364" description="Hemagglutinin HA1 chain" evidence="1">
    <location>
        <begin position="19"/>
        <end position="341"/>
    </location>
</feature>
<feature type="chain" id="PRO_0000038956" description="Hemagglutinin HA2 chain" evidence="1">
    <location>
        <begin position="343"/>
        <end position="563"/>
    </location>
</feature>
<feature type="topological domain" description="Extracellular" evidence="1">
    <location>
        <begin position="19"/>
        <end position="529"/>
    </location>
</feature>
<feature type="transmembrane region" description="Helical" evidence="1">
    <location>
        <begin position="530"/>
        <end position="550"/>
    </location>
</feature>
<feature type="topological domain" description="Cytoplasmic" evidence="1">
    <location>
        <begin position="551"/>
        <end position="563"/>
    </location>
</feature>
<feature type="site" description="Cleavage; by host" evidence="1">
    <location>
        <begin position="342"/>
        <end position="343"/>
    </location>
</feature>
<feature type="lipid moiety-binding region" description="S-palmitoyl cysteine; by host" evidence="1">
    <location>
        <position position="559"/>
    </location>
</feature>
<feature type="lipid moiety-binding region" description="S-palmitoyl cysteine; by host" evidence="1">
    <location>
        <position position="562"/>
    </location>
</feature>
<feature type="glycosylation site" description="N-linked (GlcNAc...) asparagine; by host" evidence="1">
    <location>
        <position position="30"/>
    </location>
</feature>
<feature type="glycosylation site" description="N-linked (GlcNAc...) asparagine; by host" evidence="1">
    <location>
        <position position="46"/>
    </location>
</feature>
<feature type="glycosylation site" description="N-linked (GlcNAc...) asparagine; by host" evidence="1">
    <location>
        <position position="141"/>
    </location>
</feature>
<feature type="glycosylation site" description="N-linked (GlcNAc...) asparagine; by host" evidence="1">
    <location>
        <position position="249"/>
    </location>
</feature>
<feature type="glycosylation site" description="N-linked (GlcNAc...) asparagine; by host" evidence="1">
    <location>
        <position position="424"/>
    </location>
</feature>
<feature type="glycosylation site" description="N-linked (GlcNAc...) asparagine; by host" evidence="1">
    <location>
        <position position="496"/>
    </location>
</feature>
<feature type="disulfide bond" description="Interchain (between HA1 and HA2 chains)" evidence="1">
    <location>
        <begin position="22"/>
        <end position="479"/>
    </location>
</feature>
<feature type="disulfide bond" evidence="1">
    <location>
        <begin position="60"/>
        <end position="286"/>
    </location>
</feature>
<feature type="disulfide bond" evidence="1">
    <location>
        <begin position="72"/>
        <end position="84"/>
    </location>
</feature>
<feature type="disulfide bond" evidence="1">
    <location>
        <begin position="105"/>
        <end position="147"/>
    </location>
</feature>
<feature type="disulfide bond" evidence="1">
    <location>
        <begin position="290"/>
        <end position="314"/>
    </location>
</feature>
<feature type="disulfide bond" evidence="1">
    <location>
        <begin position="486"/>
        <end position="490"/>
    </location>
</feature>
<protein>
    <recommendedName>
        <fullName evidence="1">Hemagglutinin</fullName>
    </recommendedName>
    <component>
        <recommendedName>
            <fullName evidence="1">Hemagglutinin HA1 chain</fullName>
        </recommendedName>
    </component>
    <component>
        <recommendedName>
            <fullName evidence="1">Hemagglutinin HA2 chain</fullName>
        </recommendedName>
    </component>
</protein>
<organism>
    <name type="scientific">Influenza A virus (strain A/Chicken/Weybridge H7N7)</name>
    <name type="common">Influenza A virus (strain A/FPV/Weybridge H7N7)</name>
    <dbReference type="NCBI Taxonomy" id="11384"/>
    <lineage>
        <taxon>Viruses</taxon>
        <taxon>Riboviria</taxon>
        <taxon>Orthornavirae</taxon>
        <taxon>Negarnaviricota</taxon>
        <taxon>Polyploviricotina</taxon>
        <taxon>Insthoviricetes</taxon>
        <taxon>Articulavirales</taxon>
        <taxon>Orthomyxoviridae</taxon>
        <taxon>Alphainfluenzavirus</taxon>
        <taxon>Alphainfluenzavirus influenzae</taxon>
        <taxon>Influenza A virus</taxon>
    </lineage>
</organism>
<accession>P36346</accession>
<accession>Q67110</accession>